<evidence type="ECO:0000255" key="1">
    <source>
        <dbReference type="HAMAP-Rule" id="MF_00480"/>
    </source>
</evidence>
<evidence type="ECO:0000305" key="2"/>
<proteinExistence type="inferred from homology"/>
<name>RS7_ANAMF</name>
<dbReference type="EMBL" id="CP001079">
    <property type="protein sequence ID" value="ACM49064.1"/>
    <property type="molecule type" value="Genomic_DNA"/>
</dbReference>
<dbReference type="RefSeq" id="WP_010267168.1">
    <property type="nucleotide sequence ID" value="NZ_AFMS01000004.1"/>
</dbReference>
<dbReference type="SMR" id="B9KHV2"/>
<dbReference type="STRING" id="320483.AMF_183"/>
<dbReference type="GeneID" id="7398639"/>
<dbReference type="KEGG" id="amf:AMF_183"/>
<dbReference type="eggNOG" id="COG0049">
    <property type="taxonomic scope" value="Bacteria"/>
</dbReference>
<dbReference type="HOGENOM" id="CLU_072226_1_1_5"/>
<dbReference type="Proteomes" id="UP000007307">
    <property type="component" value="Chromosome"/>
</dbReference>
<dbReference type="GO" id="GO:0015935">
    <property type="term" value="C:small ribosomal subunit"/>
    <property type="evidence" value="ECO:0007669"/>
    <property type="project" value="InterPro"/>
</dbReference>
<dbReference type="GO" id="GO:0019843">
    <property type="term" value="F:rRNA binding"/>
    <property type="evidence" value="ECO:0007669"/>
    <property type="project" value="UniProtKB-UniRule"/>
</dbReference>
<dbReference type="GO" id="GO:0003735">
    <property type="term" value="F:structural constituent of ribosome"/>
    <property type="evidence" value="ECO:0007669"/>
    <property type="project" value="InterPro"/>
</dbReference>
<dbReference type="GO" id="GO:0000049">
    <property type="term" value="F:tRNA binding"/>
    <property type="evidence" value="ECO:0007669"/>
    <property type="project" value="UniProtKB-UniRule"/>
</dbReference>
<dbReference type="GO" id="GO:0006412">
    <property type="term" value="P:translation"/>
    <property type="evidence" value="ECO:0007669"/>
    <property type="project" value="UniProtKB-UniRule"/>
</dbReference>
<dbReference type="CDD" id="cd14869">
    <property type="entry name" value="uS7_Bacteria"/>
    <property type="match status" value="1"/>
</dbReference>
<dbReference type="Gene3D" id="1.10.455.10">
    <property type="entry name" value="Ribosomal protein S7 domain"/>
    <property type="match status" value="1"/>
</dbReference>
<dbReference type="HAMAP" id="MF_00480_B">
    <property type="entry name" value="Ribosomal_uS7_B"/>
    <property type="match status" value="1"/>
</dbReference>
<dbReference type="InterPro" id="IPR000235">
    <property type="entry name" value="Ribosomal_uS7"/>
</dbReference>
<dbReference type="InterPro" id="IPR005717">
    <property type="entry name" value="Ribosomal_uS7_bac/org-type"/>
</dbReference>
<dbReference type="InterPro" id="IPR023798">
    <property type="entry name" value="Ribosomal_uS7_dom"/>
</dbReference>
<dbReference type="InterPro" id="IPR036823">
    <property type="entry name" value="Ribosomal_uS7_dom_sf"/>
</dbReference>
<dbReference type="NCBIfam" id="TIGR01029">
    <property type="entry name" value="rpsG_bact"/>
    <property type="match status" value="1"/>
</dbReference>
<dbReference type="PANTHER" id="PTHR11205">
    <property type="entry name" value="RIBOSOMAL PROTEIN S7"/>
    <property type="match status" value="1"/>
</dbReference>
<dbReference type="Pfam" id="PF00177">
    <property type="entry name" value="Ribosomal_S7"/>
    <property type="match status" value="1"/>
</dbReference>
<dbReference type="PIRSF" id="PIRSF002122">
    <property type="entry name" value="RPS7p_RPS7a_RPS5e_RPS7o"/>
    <property type="match status" value="1"/>
</dbReference>
<dbReference type="SUPFAM" id="SSF47973">
    <property type="entry name" value="Ribosomal protein S7"/>
    <property type="match status" value="1"/>
</dbReference>
<gene>
    <name evidence="1" type="primary">rpsG</name>
    <name type="ordered locus">AMF_183</name>
</gene>
<sequence length="160" mass="18035">MSRRRRVSRRPVVSDGGPGGVLLARFINVVMSRGKKALAERIVSGALKMAESKSTGETGVSIFNTAVSNVMPRMEVRSRRVGGVTYQIPVEVREDRSTSLALRWIVKAARTNRKRTNKTYMSCLCNELLEAYNKRGSACKMKEEKFRMAEANKAFSHFRF</sequence>
<accession>B9KHV2</accession>
<feature type="chain" id="PRO_1000135574" description="Small ribosomal subunit protein uS7">
    <location>
        <begin position="1"/>
        <end position="160"/>
    </location>
</feature>
<comment type="function">
    <text evidence="1">One of the primary rRNA binding proteins, it binds directly to 16S rRNA where it nucleates assembly of the head domain of the 30S subunit. Is located at the subunit interface close to the decoding center, probably blocks exit of the E-site tRNA.</text>
</comment>
<comment type="subunit">
    <text evidence="1">Part of the 30S ribosomal subunit. Contacts proteins S9 and S11.</text>
</comment>
<comment type="similarity">
    <text evidence="1">Belongs to the universal ribosomal protein uS7 family.</text>
</comment>
<keyword id="KW-1185">Reference proteome</keyword>
<keyword id="KW-0687">Ribonucleoprotein</keyword>
<keyword id="KW-0689">Ribosomal protein</keyword>
<keyword id="KW-0694">RNA-binding</keyword>
<keyword id="KW-0699">rRNA-binding</keyword>
<keyword id="KW-0820">tRNA-binding</keyword>
<organism>
    <name type="scientific">Anaplasma marginale (strain Florida)</name>
    <dbReference type="NCBI Taxonomy" id="320483"/>
    <lineage>
        <taxon>Bacteria</taxon>
        <taxon>Pseudomonadati</taxon>
        <taxon>Pseudomonadota</taxon>
        <taxon>Alphaproteobacteria</taxon>
        <taxon>Rickettsiales</taxon>
        <taxon>Anaplasmataceae</taxon>
        <taxon>Anaplasma</taxon>
    </lineage>
</organism>
<protein>
    <recommendedName>
        <fullName evidence="1">Small ribosomal subunit protein uS7</fullName>
    </recommendedName>
    <alternativeName>
        <fullName evidence="2">30S ribosomal protein S7</fullName>
    </alternativeName>
</protein>
<reference key="1">
    <citation type="journal article" date="2009" name="BMC Genomics">
        <title>Conservation in the face of diversity: multistrain analysis of an intracellular bacterium.</title>
        <authorList>
            <person name="Dark M.J."/>
            <person name="Herndon D.R."/>
            <person name="Kappmeyer L.S."/>
            <person name="Gonzales M.P."/>
            <person name="Nordeen E."/>
            <person name="Palmer G.H."/>
            <person name="Knowles D.P. Jr."/>
            <person name="Brayton K.A."/>
        </authorList>
    </citation>
    <scope>NUCLEOTIDE SEQUENCE [LARGE SCALE GENOMIC DNA]</scope>
    <source>
        <strain>Florida</strain>
    </source>
</reference>